<gene>
    <name evidence="1" type="primary">rps18</name>
</gene>
<feature type="chain" id="PRO_0000345582" description="Small ribosomal subunit protein bS18c">
    <location>
        <begin position="1"/>
        <end position="75"/>
    </location>
</feature>
<feature type="region of interest" description="Disordered" evidence="2">
    <location>
        <begin position="1"/>
        <end position="21"/>
    </location>
</feature>
<feature type="compositionally biased region" description="Basic residues" evidence="2">
    <location>
        <begin position="1"/>
        <end position="12"/>
    </location>
</feature>
<comment type="subunit">
    <text evidence="1">Part of the 30S ribosomal subunit.</text>
</comment>
<comment type="subcellular location">
    <subcellularLocation>
        <location>Plastid</location>
        <location>Chloroplast</location>
    </subcellularLocation>
</comment>
<comment type="similarity">
    <text evidence="1">Belongs to the bacterial ribosomal protein bS18 family.</text>
</comment>
<sequence>MNKSKRSFRRRLPPIGSRDQIDHKNMSSISQFISERGKILSGRVSRLTPKQQRLMTIAIKRARIPSSSPFLNNDN</sequence>
<organism>
    <name type="scientific">Cycas taitungensis</name>
    <name type="common">Prince sago</name>
    <name type="synonym">Cycas taiwaniana</name>
    <dbReference type="NCBI Taxonomy" id="54799"/>
    <lineage>
        <taxon>Eukaryota</taxon>
        <taxon>Viridiplantae</taxon>
        <taxon>Streptophyta</taxon>
        <taxon>Embryophyta</taxon>
        <taxon>Tracheophyta</taxon>
        <taxon>Spermatophyta</taxon>
        <taxon>Cycadidae</taxon>
        <taxon>Cycadales</taxon>
        <taxon>Cycadaceae</taxon>
        <taxon>Cycas</taxon>
    </lineage>
</organism>
<keyword id="KW-0150">Chloroplast</keyword>
<keyword id="KW-0934">Plastid</keyword>
<keyword id="KW-0687">Ribonucleoprotein</keyword>
<keyword id="KW-0689">Ribosomal protein</keyword>
<keyword id="KW-0694">RNA-binding</keyword>
<keyword id="KW-0699">rRNA-binding</keyword>
<name>RR18_CYCTA</name>
<evidence type="ECO:0000255" key="1">
    <source>
        <dbReference type="HAMAP-Rule" id="MF_00270"/>
    </source>
</evidence>
<evidence type="ECO:0000256" key="2">
    <source>
        <dbReference type="SAM" id="MobiDB-lite"/>
    </source>
</evidence>
<evidence type="ECO:0000305" key="3"/>
<reference key="1">
    <citation type="journal article" date="2007" name="Mol. Biol. Evol.">
        <title>Chloroplast genome (cpDNA) of Cycas taitungensis and 56 cp protein-coding genes of Gnetum parvifolium: insights into cpDNA evolution and phylogeny of extant seed plants.</title>
        <authorList>
            <person name="Wu C.-S."/>
            <person name="Wang Y.-N."/>
            <person name="Liu S.-M."/>
            <person name="Chaw S.-M."/>
        </authorList>
    </citation>
    <scope>NUCLEOTIDE SEQUENCE [LARGE SCALE GENOMIC DNA]</scope>
</reference>
<dbReference type="EMBL" id="AP009339">
    <property type="protein sequence ID" value="BAF64970.1"/>
    <property type="molecule type" value="Genomic_DNA"/>
</dbReference>
<dbReference type="RefSeq" id="YP_001312229.1">
    <property type="nucleotide sequence ID" value="NC_009618.1"/>
</dbReference>
<dbReference type="SMR" id="A6H5K4"/>
<dbReference type="GeneID" id="5309598"/>
<dbReference type="GO" id="GO:0009507">
    <property type="term" value="C:chloroplast"/>
    <property type="evidence" value="ECO:0007669"/>
    <property type="project" value="UniProtKB-SubCell"/>
</dbReference>
<dbReference type="GO" id="GO:0005763">
    <property type="term" value="C:mitochondrial small ribosomal subunit"/>
    <property type="evidence" value="ECO:0007669"/>
    <property type="project" value="TreeGrafter"/>
</dbReference>
<dbReference type="GO" id="GO:0070181">
    <property type="term" value="F:small ribosomal subunit rRNA binding"/>
    <property type="evidence" value="ECO:0007669"/>
    <property type="project" value="TreeGrafter"/>
</dbReference>
<dbReference type="GO" id="GO:0003735">
    <property type="term" value="F:structural constituent of ribosome"/>
    <property type="evidence" value="ECO:0007669"/>
    <property type="project" value="InterPro"/>
</dbReference>
<dbReference type="GO" id="GO:0006412">
    <property type="term" value="P:translation"/>
    <property type="evidence" value="ECO:0007669"/>
    <property type="project" value="UniProtKB-UniRule"/>
</dbReference>
<dbReference type="FunFam" id="4.10.640.10:FF:000002">
    <property type="entry name" value="30S ribosomal protein S18, chloroplastic"/>
    <property type="match status" value="1"/>
</dbReference>
<dbReference type="Gene3D" id="4.10.640.10">
    <property type="entry name" value="Ribosomal protein S18"/>
    <property type="match status" value="1"/>
</dbReference>
<dbReference type="HAMAP" id="MF_00270">
    <property type="entry name" value="Ribosomal_bS18"/>
    <property type="match status" value="1"/>
</dbReference>
<dbReference type="InterPro" id="IPR001648">
    <property type="entry name" value="Ribosomal_bS18"/>
</dbReference>
<dbReference type="InterPro" id="IPR036870">
    <property type="entry name" value="Ribosomal_bS18_sf"/>
</dbReference>
<dbReference type="NCBIfam" id="TIGR00165">
    <property type="entry name" value="S18"/>
    <property type="match status" value="1"/>
</dbReference>
<dbReference type="PANTHER" id="PTHR13479">
    <property type="entry name" value="30S RIBOSOMAL PROTEIN S18"/>
    <property type="match status" value="1"/>
</dbReference>
<dbReference type="PANTHER" id="PTHR13479:SF40">
    <property type="entry name" value="SMALL RIBOSOMAL SUBUNIT PROTEIN BS18M"/>
    <property type="match status" value="1"/>
</dbReference>
<dbReference type="Pfam" id="PF01084">
    <property type="entry name" value="Ribosomal_S18"/>
    <property type="match status" value="1"/>
</dbReference>
<dbReference type="PRINTS" id="PR00974">
    <property type="entry name" value="RIBOSOMALS18"/>
</dbReference>
<dbReference type="SUPFAM" id="SSF46911">
    <property type="entry name" value="Ribosomal protein S18"/>
    <property type="match status" value="1"/>
</dbReference>
<protein>
    <recommendedName>
        <fullName evidence="3">Small ribosomal subunit protein bS18c</fullName>
    </recommendedName>
    <alternativeName>
        <fullName>Chloroplast 30S ribosomal protein S18</fullName>
    </alternativeName>
</protein>
<proteinExistence type="inferred from homology"/>
<accession>A6H5K4</accession>
<geneLocation type="chloroplast"/>